<feature type="chain" id="PRO_0000082237" description="Taste receptor type 2 member 10">
    <location>
        <begin position="1"/>
        <end position="307"/>
    </location>
</feature>
<feature type="topological domain" description="Extracellular" evidence="2">
    <location>
        <begin position="1"/>
        <end position="6"/>
    </location>
</feature>
<feature type="transmembrane region" description="Helical; Name=1" evidence="2">
    <location>
        <begin position="7"/>
        <end position="27"/>
    </location>
</feature>
<feature type="topological domain" description="Cytoplasmic" evidence="2">
    <location>
        <begin position="28"/>
        <end position="42"/>
    </location>
</feature>
<feature type="transmembrane region" description="Helical; Name=2" evidence="2">
    <location>
        <begin position="43"/>
        <end position="63"/>
    </location>
</feature>
<feature type="topological domain" description="Extracellular" evidence="2">
    <location>
        <begin position="64"/>
        <end position="100"/>
    </location>
</feature>
<feature type="transmembrane region" description="Helical; Name=3" evidence="2">
    <location>
        <begin position="101"/>
        <end position="121"/>
    </location>
</feature>
<feature type="topological domain" description="Cytoplasmic" evidence="2">
    <location>
        <begin position="122"/>
        <end position="126"/>
    </location>
</feature>
<feature type="transmembrane region" description="Helical; Name=4" evidence="2">
    <location>
        <begin position="127"/>
        <end position="147"/>
    </location>
</feature>
<feature type="topological domain" description="Extracellular" evidence="2">
    <location>
        <begin position="148"/>
        <end position="179"/>
    </location>
</feature>
<feature type="transmembrane region" description="Helical; Name=5" evidence="2">
    <location>
        <begin position="180"/>
        <end position="200"/>
    </location>
</feature>
<feature type="topological domain" description="Cytoplasmic" evidence="2">
    <location>
        <begin position="201"/>
        <end position="227"/>
    </location>
</feature>
<feature type="transmembrane region" description="Helical; Name=6" evidence="2">
    <location>
        <begin position="228"/>
        <end position="248"/>
    </location>
</feature>
<feature type="topological domain" description="Extracellular" evidence="2">
    <location>
        <begin position="249"/>
        <end position="257"/>
    </location>
</feature>
<feature type="transmembrane region" description="Helical; Name=7" evidence="2">
    <location>
        <begin position="258"/>
        <end position="278"/>
    </location>
</feature>
<feature type="topological domain" description="Cytoplasmic" evidence="2">
    <location>
        <begin position="279"/>
        <end position="307"/>
    </location>
</feature>
<feature type="glycosylation site" description="N-linked (GlcNAc...) asparagine" evidence="2">
    <location>
        <position position="92"/>
    </location>
</feature>
<feature type="glycosylation site" description="N-linked (GlcNAc...) asparagine" evidence="2">
    <location>
        <position position="158"/>
    </location>
</feature>
<protein>
    <recommendedName>
        <fullName>Taste receptor type 2 member 10</fullName>
        <shortName>T2R10</shortName>
    </recommendedName>
</protein>
<organism>
    <name type="scientific">Gorilla gorilla gorilla</name>
    <name type="common">Western lowland gorilla</name>
    <dbReference type="NCBI Taxonomy" id="9595"/>
    <lineage>
        <taxon>Eukaryota</taxon>
        <taxon>Metazoa</taxon>
        <taxon>Chordata</taxon>
        <taxon>Craniata</taxon>
        <taxon>Vertebrata</taxon>
        <taxon>Euteleostomi</taxon>
        <taxon>Mammalia</taxon>
        <taxon>Eutheria</taxon>
        <taxon>Euarchontoglires</taxon>
        <taxon>Primates</taxon>
        <taxon>Haplorrhini</taxon>
        <taxon>Catarrhini</taxon>
        <taxon>Hominidae</taxon>
        <taxon>Gorilla</taxon>
    </lineage>
</organism>
<sequence>MLRVVEGIFIFVVISEXVFGVLGNGFIGLVNCIDCAKNKLSTIGFILTGLAISRIFLIWIIITDGFIQIFSPDIYASGNLIEYISYFWVIGNQSSMWFATSLSIFYFLKIANFSNYIFLWLKSRTNMVLPFMIVFLLISSLLNFAHIAKILNDYKMKNDTVWDLNMYKSEYFIKQILLNLGVIFFFTLSLITCVFLIISLWRHNRQMQSNVTGLRDSNTEAHVKAMKVLISFXILFILYFIGMAIEISCFTVRENKLLLMFGMTTTAIYPWGHSFILILGNSKLKQASLRVLQQLKCCEKRKNLRVT</sequence>
<proteinExistence type="inferred from homology"/>
<reference key="1">
    <citation type="journal article" date="2005" name="Mol. Biol. Evol.">
        <title>Evolution of bitter taste receptors in humans and apes.</title>
        <authorList>
            <person name="Fischer A."/>
            <person name="Gilad Y."/>
            <person name="Man O."/>
            <person name="Paeaebo S."/>
        </authorList>
    </citation>
    <scope>NUCLEOTIDE SEQUENCE [GENOMIC DNA]</scope>
</reference>
<evidence type="ECO:0000250" key="1"/>
<evidence type="ECO:0000255" key="2"/>
<evidence type="ECO:0000305" key="3"/>
<keyword id="KW-0297">G-protein coupled receptor</keyword>
<keyword id="KW-0325">Glycoprotein</keyword>
<keyword id="KW-0472">Membrane</keyword>
<keyword id="KW-0675">Receptor</keyword>
<keyword id="KW-1185">Reference proteome</keyword>
<keyword id="KW-0716">Sensory transduction</keyword>
<keyword id="KW-0919">Taste</keyword>
<keyword id="KW-0807">Transducer</keyword>
<keyword id="KW-0812">Transmembrane</keyword>
<keyword id="KW-1133">Transmembrane helix</keyword>
<gene>
    <name type="primary">TAS2R10</name>
</gene>
<accession>Q645Z4</accession>
<comment type="function">
    <text evidence="1">Receptor that may play a role in the perception of bitterness and is gustducin-linked. May play a role in sensing the chemical composition of the gastrointestinal content. The activity of this receptor may stimulate alpha gustducin, mediate PLC-beta-2 activation and lead to the gating of TRPM5 (By similarity).</text>
</comment>
<comment type="subcellular location">
    <subcellularLocation>
        <location>Membrane</location>
        <topology>Multi-pass membrane protein</topology>
    </subcellularLocation>
</comment>
<comment type="miscellaneous">
    <text>Most taste cells may be activated by a limited number of bitter compounds; individual taste cells can discriminate among bitter stimuli.</text>
</comment>
<comment type="similarity">
    <text evidence="3">Belongs to the G-protein coupled receptor T2R family.</text>
</comment>
<dbReference type="EMBL" id="AY724915">
    <property type="protein sequence ID" value="AAU21125.1"/>
    <property type="molecule type" value="Genomic_DNA"/>
</dbReference>
<dbReference type="FunCoup" id="Q645Z4">
    <property type="interactions" value="214"/>
</dbReference>
<dbReference type="STRING" id="9593.ENSGGOP00000009834"/>
<dbReference type="GlyCosmos" id="Q645Z4">
    <property type="glycosylation" value="2 sites, No reported glycans"/>
</dbReference>
<dbReference type="eggNOG" id="ENOG502T3AX">
    <property type="taxonomic scope" value="Eukaryota"/>
</dbReference>
<dbReference type="InParanoid" id="Q645Z4"/>
<dbReference type="Proteomes" id="UP000001519">
    <property type="component" value="Unplaced"/>
</dbReference>
<dbReference type="GO" id="GO:0016020">
    <property type="term" value="C:membrane"/>
    <property type="evidence" value="ECO:0000318"/>
    <property type="project" value="GO_Central"/>
</dbReference>
<dbReference type="GO" id="GO:0005886">
    <property type="term" value="C:plasma membrane"/>
    <property type="evidence" value="ECO:0007669"/>
    <property type="project" value="UniProtKB-ARBA"/>
</dbReference>
<dbReference type="GO" id="GO:0033038">
    <property type="term" value="F:bitter taste receptor activity"/>
    <property type="evidence" value="ECO:0007669"/>
    <property type="project" value="InterPro"/>
</dbReference>
<dbReference type="GO" id="GO:0004930">
    <property type="term" value="F:G protein-coupled receptor activity"/>
    <property type="evidence" value="ECO:0007669"/>
    <property type="project" value="UniProtKB-KW"/>
</dbReference>
<dbReference type="CDD" id="cd15021">
    <property type="entry name" value="7tm_TAS2R10"/>
    <property type="match status" value="1"/>
</dbReference>
<dbReference type="FunFam" id="1.20.1070.10:FF:000042">
    <property type="entry name" value="Taste receptor type 2 member 7"/>
    <property type="match status" value="1"/>
</dbReference>
<dbReference type="Gene3D" id="1.20.1070.10">
    <property type="entry name" value="Rhodopsin 7-helix transmembrane proteins"/>
    <property type="match status" value="1"/>
</dbReference>
<dbReference type="InterPro" id="IPR007960">
    <property type="entry name" value="TAS2R"/>
</dbReference>
<dbReference type="PANTHER" id="PTHR11394">
    <property type="entry name" value="TASTE RECEPTOR TYPE 2"/>
    <property type="match status" value="1"/>
</dbReference>
<dbReference type="PANTHER" id="PTHR11394:SF63">
    <property type="entry name" value="TASTE RECEPTOR TYPE 2 MEMBER 10"/>
    <property type="match status" value="1"/>
</dbReference>
<dbReference type="Pfam" id="PF05296">
    <property type="entry name" value="TAS2R"/>
    <property type="match status" value="1"/>
</dbReference>
<dbReference type="SUPFAM" id="SSF81321">
    <property type="entry name" value="Family A G protein-coupled receptor-like"/>
    <property type="match status" value="1"/>
</dbReference>
<name>T2R10_GORGO</name>